<dbReference type="EC" id="3.6.5.n1" evidence="1"/>
<dbReference type="EMBL" id="AE009442">
    <property type="protein sequence ID" value="AAO29136.1"/>
    <property type="molecule type" value="Genomic_DNA"/>
</dbReference>
<dbReference type="SMR" id="Q87C09"/>
<dbReference type="KEGG" id="xft:PD_1287"/>
<dbReference type="HOGENOM" id="CLU_009995_3_3_6"/>
<dbReference type="Proteomes" id="UP000002516">
    <property type="component" value="Chromosome"/>
</dbReference>
<dbReference type="GO" id="GO:0005886">
    <property type="term" value="C:plasma membrane"/>
    <property type="evidence" value="ECO:0007669"/>
    <property type="project" value="UniProtKB-SubCell"/>
</dbReference>
<dbReference type="GO" id="GO:0005525">
    <property type="term" value="F:GTP binding"/>
    <property type="evidence" value="ECO:0007669"/>
    <property type="project" value="UniProtKB-UniRule"/>
</dbReference>
<dbReference type="GO" id="GO:0003924">
    <property type="term" value="F:GTPase activity"/>
    <property type="evidence" value="ECO:0007669"/>
    <property type="project" value="UniProtKB-UniRule"/>
</dbReference>
<dbReference type="GO" id="GO:0097216">
    <property type="term" value="F:guanosine tetraphosphate binding"/>
    <property type="evidence" value="ECO:0007669"/>
    <property type="project" value="UniProtKB-ARBA"/>
</dbReference>
<dbReference type="GO" id="GO:0043022">
    <property type="term" value="F:ribosome binding"/>
    <property type="evidence" value="ECO:0007669"/>
    <property type="project" value="UniProtKB-UniRule"/>
</dbReference>
<dbReference type="GO" id="GO:0003746">
    <property type="term" value="F:translation elongation factor activity"/>
    <property type="evidence" value="ECO:0007669"/>
    <property type="project" value="UniProtKB-UniRule"/>
</dbReference>
<dbReference type="GO" id="GO:0045727">
    <property type="term" value="P:positive regulation of translation"/>
    <property type="evidence" value="ECO:0007669"/>
    <property type="project" value="UniProtKB-UniRule"/>
</dbReference>
<dbReference type="CDD" id="cd03699">
    <property type="entry name" value="EF4_II"/>
    <property type="match status" value="1"/>
</dbReference>
<dbReference type="CDD" id="cd16260">
    <property type="entry name" value="EF4_III"/>
    <property type="match status" value="1"/>
</dbReference>
<dbReference type="CDD" id="cd01890">
    <property type="entry name" value="LepA"/>
    <property type="match status" value="1"/>
</dbReference>
<dbReference type="CDD" id="cd03709">
    <property type="entry name" value="lepA_C"/>
    <property type="match status" value="1"/>
</dbReference>
<dbReference type="FunFam" id="3.40.50.300:FF:000078">
    <property type="entry name" value="Elongation factor 4"/>
    <property type="match status" value="1"/>
</dbReference>
<dbReference type="FunFam" id="2.40.30.10:FF:000015">
    <property type="entry name" value="Translation factor GUF1, mitochondrial"/>
    <property type="match status" value="1"/>
</dbReference>
<dbReference type="FunFam" id="3.30.70.240:FF:000007">
    <property type="entry name" value="Translation factor GUF1, mitochondrial"/>
    <property type="match status" value="1"/>
</dbReference>
<dbReference type="FunFam" id="3.30.70.2570:FF:000001">
    <property type="entry name" value="Translation factor GUF1, mitochondrial"/>
    <property type="match status" value="1"/>
</dbReference>
<dbReference type="FunFam" id="3.30.70.870:FF:000004">
    <property type="entry name" value="Translation factor GUF1, mitochondrial"/>
    <property type="match status" value="1"/>
</dbReference>
<dbReference type="Gene3D" id="3.30.70.240">
    <property type="match status" value="1"/>
</dbReference>
<dbReference type="Gene3D" id="3.30.70.2570">
    <property type="entry name" value="Elongation factor 4, C-terminal domain"/>
    <property type="match status" value="1"/>
</dbReference>
<dbReference type="Gene3D" id="3.30.70.870">
    <property type="entry name" value="Elongation Factor G (Translational Gtpase), domain 3"/>
    <property type="match status" value="1"/>
</dbReference>
<dbReference type="Gene3D" id="3.40.50.300">
    <property type="entry name" value="P-loop containing nucleotide triphosphate hydrolases"/>
    <property type="match status" value="1"/>
</dbReference>
<dbReference type="Gene3D" id="2.40.30.10">
    <property type="entry name" value="Translation factors"/>
    <property type="match status" value="1"/>
</dbReference>
<dbReference type="HAMAP" id="MF_00071">
    <property type="entry name" value="LepA"/>
    <property type="match status" value="1"/>
</dbReference>
<dbReference type="InterPro" id="IPR006297">
    <property type="entry name" value="EF-4"/>
</dbReference>
<dbReference type="InterPro" id="IPR035647">
    <property type="entry name" value="EFG_III/V"/>
</dbReference>
<dbReference type="InterPro" id="IPR000640">
    <property type="entry name" value="EFG_V-like"/>
</dbReference>
<dbReference type="InterPro" id="IPR004161">
    <property type="entry name" value="EFTu-like_2"/>
</dbReference>
<dbReference type="InterPro" id="IPR031157">
    <property type="entry name" value="G_TR_CS"/>
</dbReference>
<dbReference type="InterPro" id="IPR038363">
    <property type="entry name" value="LepA_C_sf"/>
</dbReference>
<dbReference type="InterPro" id="IPR013842">
    <property type="entry name" value="LepA_CTD"/>
</dbReference>
<dbReference type="InterPro" id="IPR035654">
    <property type="entry name" value="LepA_IV"/>
</dbReference>
<dbReference type="InterPro" id="IPR027417">
    <property type="entry name" value="P-loop_NTPase"/>
</dbReference>
<dbReference type="InterPro" id="IPR005225">
    <property type="entry name" value="Small_GTP-bd"/>
</dbReference>
<dbReference type="InterPro" id="IPR000795">
    <property type="entry name" value="T_Tr_GTP-bd_dom"/>
</dbReference>
<dbReference type="InterPro" id="IPR009000">
    <property type="entry name" value="Transl_B-barrel_sf"/>
</dbReference>
<dbReference type="NCBIfam" id="TIGR01393">
    <property type="entry name" value="lepA"/>
    <property type="match status" value="1"/>
</dbReference>
<dbReference type="NCBIfam" id="TIGR00231">
    <property type="entry name" value="small_GTP"/>
    <property type="match status" value="1"/>
</dbReference>
<dbReference type="PANTHER" id="PTHR43512:SF4">
    <property type="entry name" value="TRANSLATION FACTOR GUF1 HOMOLOG, CHLOROPLASTIC"/>
    <property type="match status" value="1"/>
</dbReference>
<dbReference type="PANTHER" id="PTHR43512">
    <property type="entry name" value="TRANSLATION FACTOR GUF1-RELATED"/>
    <property type="match status" value="1"/>
</dbReference>
<dbReference type="Pfam" id="PF00679">
    <property type="entry name" value="EFG_C"/>
    <property type="match status" value="1"/>
</dbReference>
<dbReference type="Pfam" id="PF00009">
    <property type="entry name" value="GTP_EFTU"/>
    <property type="match status" value="1"/>
</dbReference>
<dbReference type="Pfam" id="PF03144">
    <property type="entry name" value="GTP_EFTU_D2"/>
    <property type="match status" value="1"/>
</dbReference>
<dbReference type="Pfam" id="PF06421">
    <property type="entry name" value="LepA_C"/>
    <property type="match status" value="1"/>
</dbReference>
<dbReference type="PRINTS" id="PR00315">
    <property type="entry name" value="ELONGATNFCT"/>
</dbReference>
<dbReference type="SMART" id="SM00838">
    <property type="entry name" value="EFG_C"/>
    <property type="match status" value="1"/>
</dbReference>
<dbReference type="SUPFAM" id="SSF54980">
    <property type="entry name" value="EF-G C-terminal domain-like"/>
    <property type="match status" value="2"/>
</dbReference>
<dbReference type="SUPFAM" id="SSF52540">
    <property type="entry name" value="P-loop containing nucleoside triphosphate hydrolases"/>
    <property type="match status" value="1"/>
</dbReference>
<dbReference type="SUPFAM" id="SSF50447">
    <property type="entry name" value="Translation proteins"/>
    <property type="match status" value="1"/>
</dbReference>
<dbReference type="PROSITE" id="PS00301">
    <property type="entry name" value="G_TR_1"/>
    <property type="match status" value="1"/>
</dbReference>
<dbReference type="PROSITE" id="PS51722">
    <property type="entry name" value="G_TR_2"/>
    <property type="match status" value="1"/>
</dbReference>
<accession>Q87C09</accession>
<evidence type="ECO:0000255" key="1">
    <source>
        <dbReference type="HAMAP-Rule" id="MF_00071"/>
    </source>
</evidence>
<reference key="1">
    <citation type="journal article" date="2003" name="J. Bacteriol.">
        <title>Comparative analyses of the complete genome sequences of Pierce's disease and citrus variegated chlorosis strains of Xylella fastidiosa.</title>
        <authorList>
            <person name="Van Sluys M.A."/>
            <person name="de Oliveira M.C."/>
            <person name="Monteiro-Vitorello C.B."/>
            <person name="Miyaki C.Y."/>
            <person name="Furlan L.R."/>
            <person name="Camargo L.E.A."/>
            <person name="da Silva A.C.R."/>
            <person name="Moon D.H."/>
            <person name="Takita M.A."/>
            <person name="Lemos E.G.M."/>
            <person name="Machado M.A."/>
            <person name="Ferro M.I.T."/>
            <person name="da Silva F.R."/>
            <person name="Goldman M.H.S."/>
            <person name="Goldman G.H."/>
            <person name="Lemos M.V.F."/>
            <person name="El-Dorry H."/>
            <person name="Tsai S.M."/>
            <person name="Carrer H."/>
            <person name="Carraro D.M."/>
            <person name="de Oliveira R.C."/>
            <person name="Nunes L.R."/>
            <person name="Siqueira W.J."/>
            <person name="Coutinho L.L."/>
            <person name="Kimura E.T."/>
            <person name="Ferro E.S."/>
            <person name="Harakava R."/>
            <person name="Kuramae E.E."/>
            <person name="Marino C.L."/>
            <person name="Giglioti E."/>
            <person name="Abreu I.L."/>
            <person name="Alves L.M.C."/>
            <person name="do Amaral A.M."/>
            <person name="Baia G.S."/>
            <person name="Blanco S.R."/>
            <person name="Brito M.S."/>
            <person name="Cannavan F.S."/>
            <person name="Celestino A.V."/>
            <person name="da Cunha A.F."/>
            <person name="Fenille R.C."/>
            <person name="Ferro J.A."/>
            <person name="Formighieri E.F."/>
            <person name="Kishi L.T."/>
            <person name="Leoni S.G."/>
            <person name="Oliveira A.R."/>
            <person name="Rosa V.E. Jr."/>
            <person name="Sassaki F.T."/>
            <person name="Sena J.A.D."/>
            <person name="de Souza A.A."/>
            <person name="Truffi D."/>
            <person name="Tsukumo F."/>
            <person name="Yanai G.M."/>
            <person name="Zaros L.G."/>
            <person name="Civerolo E.L."/>
            <person name="Simpson A.J.G."/>
            <person name="Almeida N.F. Jr."/>
            <person name="Setubal J.C."/>
            <person name="Kitajima J.P."/>
        </authorList>
    </citation>
    <scope>NUCLEOTIDE SEQUENCE [LARGE SCALE GENOMIC DNA]</scope>
    <source>
        <strain>Temecula1 / ATCC 700964</strain>
    </source>
</reference>
<keyword id="KW-0997">Cell inner membrane</keyword>
<keyword id="KW-1003">Cell membrane</keyword>
<keyword id="KW-0342">GTP-binding</keyword>
<keyword id="KW-0378">Hydrolase</keyword>
<keyword id="KW-0472">Membrane</keyword>
<keyword id="KW-0547">Nucleotide-binding</keyword>
<keyword id="KW-0648">Protein biosynthesis</keyword>
<keyword id="KW-1185">Reference proteome</keyword>
<comment type="function">
    <text evidence="1">Required for accurate and efficient protein synthesis under certain stress conditions. May act as a fidelity factor of the translation reaction, by catalyzing a one-codon backward translocation of tRNAs on improperly translocated ribosomes. Back-translocation proceeds from a post-translocation (POST) complex to a pre-translocation (PRE) complex, thus giving elongation factor G a second chance to translocate the tRNAs correctly. Binds to ribosomes in a GTP-dependent manner.</text>
</comment>
<comment type="catalytic activity">
    <reaction evidence="1">
        <text>GTP + H2O = GDP + phosphate + H(+)</text>
        <dbReference type="Rhea" id="RHEA:19669"/>
        <dbReference type="ChEBI" id="CHEBI:15377"/>
        <dbReference type="ChEBI" id="CHEBI:15378"/>
        <dbReference type="ChEBI" id="CHEBI:37565"/>
        <dbReference type="ChEBI" id="CHEBI:43474"/>
        <dbReference type="ChEBI" id="CHEBI:58189"/>
        <dbReference type="EC" id="3.6.5.n1"/>
    </reaction>
</comment>
<comment type="subcellular location">
    <subcellularLocation>
        <location evidence="1">Cell inner membrane</location>
        <topology evidence="1">Peripheral membrane protein</topology>
        <orientation evidence="1">Cytoplasmic side</orientation>
    </subcellularLocation>
</comment>
<comment type="similarity">
    <text evidence="1">Belongs to the TRAFAC class translation factor GTPase superfamily. Classic translation factor GTPase family. LepA subfamily.</text>
</comment>
<organism>
    <name type="scientific">Xylella fastidiosa (strain Temecula1 / ATCC 700964)</name>
    <dbReference type="NCBI Taxonomy" id="183190"/>
    <lineage>
        <taxon>Bacteria</taxon>
        <taxon>Pseudomonadati</taxon>
        <taxon>Pseudomonadota</taxon>
        <taxon>Gammaproteobacteria</taxon>
        <taxon>Lysobacterales</taxon>
        <taxon>Lysobacteraceae</taxon>
        <taxon>Xylella</taxon>
    </lineage>
</organism>
<proteinExistence type="inferred from homology"/>
<name>LEPA_XYLFT</name>
<sequence>MSSDPMRNIRNFSIIAHVDHGKSTLADRIIQLCGGLEAREMEAQVLDSNPIERERGITIKAQSVSLLYKAQDGQNYHLNLIDTPGHVDFSYEVSRSLAACEGALLVVDASQGVEAQSVANCYTAVEQGLEVVPILNKIDLPTADTERAKAEIETVIGIDASEAVAVSAKTGLYVEQVLEAIVQRIPAPQPRDTEKLQALIIDSWFDNYLGVVSLVRVMQGEITPGNKLLVMSTGRSHQVDAVGVFTPKRKTLAKLTAGEVGWVTASIKDVHGAPVGDTLTLTSDPAPKPLPGFQEVQPRVFAGLFPVDAEDYPDLREALEKLRLNDAALRFEPENSEAMGFGFRCGFLGMLHMEIVQERLEREYDLNLITTAPTVIYEVLKNDGTLVAMDNPAKMPPINQINEIREPIIRSNILTPPDYVGAVITLCEEKRGSQISITYLGNQVQVAYELPMAEVVLDFFDKLKSVTRGYASLDYHFLRFQEGPFVRVDTLINGDRVDALSVIVHRHQAERRGRELCEKMKDLIPRQMFDVAIQAAIGSQIISRSTVKAMRKNVLAKCYGGDISRKKKLLEKQKEGKKRMKQIGRVEIPQEAFLAVLQIDNK</sequence>
<feature type="chain" id="PRO_0000176380" description="Elongation factor 4">
    <location>
        <begin position="1"/>
        <end position="602"/>
    </location>
</feature>
<feature type="domain" description="tr-type G">
    <location>
        <begin position="7"/>
        <end position="189"/>
    </location>
</feature>
<feature type="binding site" evidence="1">
    <location>
        <begin position="19"/>
        <end position="24"/>
    </location>
    <ligand>
        <name>GTP</name>
        <dbReference type="ChEBI" id="CHEBI:37565"/>
    </ligand>
</feature>
<feature type="binding site" evidence="1">
    <location>
        <begin position="136"/>
        <end position="139"/>
    </location>
    <ligand>
        <name>GTP</name>
        <dbReference type="ChEBI" id="CHEBI:37565"/>
    </ligand>
</feature>
<protein>
    <recommendedName>
        <fullName evidence="1">Elongation factor 4</fullName>
        <shortName evidence="1">EF-4</shortName>
        <ecNumber evidence="1">3.6.5.n1</ecNumber>
    </recommendedName>
    <alternativeName>
        <fullName evidence="1">Ribosomal back-translocase LepA</fullName>
    </alternativeName>
</protein>
<gene>
    <name evidence="1" type="primary">lepA</name>
    <name type="ordered locus">PD_1287</name>
</gene>